<protein>
    <recommendedName>
        <fullName evidence="1">N-acetyl-gamma-glutamyl-phosphate reductase</fullName>
        <shortName evidence="1">AGPR</shortName>
        <ecNumber evidence="1">1.2.1.38</ecNumber>
    </recommendedName>
    <alternativeName>
        <fullName evidence="1">N-acetyl-glutamate semialdehyde dehydrogenase</fullName>
        <shortName evidence="1">NAGSA dehydrogenase</shortName>
    </alternativeName>
</protein>
<feature type="chain" id="PRO_0000112475" description="N-acetyl-gamma-glutamyl-phosphate reductase">
    <location>
        <begin position="1"/>
        <end position="337"/>
    </location>
</feature>
<feature type="active site" evidence="1">
    <location>
        <position position="149"/>
    </location>
</feature>
<comment type="function">
    <text evidence="1">Catalyzes the NADPH-dependent reduction of N-acetyl-5-glutamyl phosphate to yield N-acetyl-L-glutamate 5-semialdehyde.</text>
</comment>
<comment type="catalytic activity">
    <reaction evidence="1">
        <text>N-acetyl-L-glutamate 5-semialdehyde + phosphate + NADP(+) = N-acetyl-L-glutamyl 5-phosphate + NADPH + H(+)</text>
        <dbReference type="Rhea" id="RHEA:21588"/>
        <dbReference type="ChEBI" id="CHEBI:15378"/>
        <dbReference type="ChEBI" id="CHEBI:29123"/>
        <dbReference type="ChEBI" id="CHEBI:43474"/>
        <dbReference type="ChEBI" id="CHEBI:57783"/>
        <dbReference type="ChEBI" id="CHEBI:57936"/>
        <dbReference type="ChEBI" id="CHEBI:58349"/>
        <dbReference type="EC" id="1.2.1.38"/>
    </reaction>
</comment>
<comment type="pathway">
    <text evidence="1">Amino-acid biosynthesis; L-arginine biosynthesis; N(2)-acetyl-L-ornithine from L-glutamate: step 3/4.</text>
</comment>
<comment type="subcellular location">
    <subcellularLocation>
        <location evidence="1">Cytoplasm</location>
    </subcellularLocation>
</comment>
<comment type="similarity">
    <text evidence="1">Belongs to the NAGSA dehydrogenase family. Type 1 subfamily.</text>
</comment>
<dbReference type="EC" id="1.2.1.38" evidence="1"/>
<dbReference type="EMBL" id="BX571662">
    <property type="protein sequence ID" value="CAE11085.1"/>
    <property type="molecule type" value="Genomic_DNA"/>
</dbReference>
<dbReference type="RefSeq" id="WP_011139867.1">
    <property type="nucleotide sequence ID" value="NC_005090.1"/>
</dbReference>
<dbReference type="SMR" id="Q7M7U1"/>
<dbReference type="STRING" id="273121.WS2086"/>
<dbReference type="KEGG" id="wsu:WS2086"/>
<dbReference type="eggNOG" id="COG0002">
    <property type="taxonomic scope" value="Bacteria"/>
</dbReference>
<dbReference type="HOGENOM" id="CLU_006384_0_1_7"/>
<dbReference type="UniPathway" id="UPA00068">
    <property type="reaction ID" value="UER00108"/>
</dbReference>
<dbReference type="Proteomes" id="UP000000422">
    <property type="component" value="Chromosome"/>
</dbReference>
<dbReference type="GO" id="GO:0005737">
    <property type="term" value="C:cytoplasm"/>
    <property type="evidence" value="ECO:0007669"/>
    <property type="project" value="UniProtKB-SubCell"/>
</dbReference>
<dbReference type="GO" id="GO:0003942">
    <property type="term" value="F:N-acetyl-gamma-glutamyl-phosphate reductase activity"/>
    <property type="evidence" value="ECO:0007669"/>
    <property type="project" value="UniProtKB-UniRule"/>
</dbReference>
<dbReference type="GO" id="GO:0051287">
    <property type="term" value="F:NAD binding"/>
    <property type="evidence" value="ECO:0007669"/>
    <property type="project" value="InterPro"/>
</dbReference>
<dbReference type="GO" id="GO:0070401">
    <property type="term" value="F:NADP+ binding"/>
    <property type="evidence" value="ECO:0007669"/>
    <property type="project" value="InterPro"/>
</dbReference>
<dbReference type="GO" id="GO:0006526">
    <property type="term" value="P:L-arginine biosynthetic process"/>
    <property type="evidence" value="ECO:0007669"/>
    <property type="project" value="UniProtKB-UniRule"/>
</dbReference>
<dbReference type="CDD" id="cd23934">
    <property type="entry name" value="AGPR_1_C"/>
    <property type="match status" value="1"/>
</dbReference>
<dbReference type="CDD" id="cd17895">
    <property type="entry name" value="AGPR_1_N"/>
    <property type="match status" value="1"/>
</dbReference>
<dbReference type="Gene3D" id="3.30.360.10">
    <property type="entry name" value="Dihydrodipicolinate Reductase, domain 2"/>
    <property type="match status" value="1"/>
</dbReference>
<dbReference type="Gene3D" id="3.40.50.720">
    <property type="entry name" value="NAD(P)-binding Rossmann-like Domain"/>
    <property type="match status" value="1"/>
</dbReference>
<dbReference type="HAMAP" id="MF_00150">
    <property type="entry name" value="ArgC_type1"/>
    <property type="match status" value="1"/>
</dbReference>
<dbReference type="InterPro" id="IPR023013">
    <property type="entry name" value="AGPR_AS"/>
</dbReference>
<dbReference type="InterPro" id="IPR000706">
    <property type="entry name" value="AGPR_type-1"/>
</dbReference>
<dbReference type="InterPro" id="IPR036291">
    <property type="entry name" value="NAD(P)-bd_dom_sf"/>
</dbReference>
<dbReference type="InterPro" id="IPR050085">
    <property type="entry name" value="NAGSA_dehydrogenase"/>
</dbReference>
<dbReference type="InterPro" id="IPR000534">
    <property type="entry name" value="Semialdehyde_DH_NAD-bd"/>
</dbReference>
<dbReference type="NCBIfam" id="TIGR01850">
    <property type="entry name" value="argC"/>
    <property type="match status" value="1"/>
</dbReference>
<dbReference type="PANTHER" id="PTHR32338:SF10">
    <property type="entry name" value="N-ACETYL-GAMMA-GLUTAMYL-PHOSPHATE REDUCTASE, CHLOROPLASTIC-RELATED"/>
    <property type="match status" value="1"/>
</dbReference>
<dbReference type="PANTHER" id="PTHR32338">
    <property type="entry name" value="N-ACETYL-GAMMA-GLUTAMYL-PHOSPHATE REDUCTASE, CHLOROPLASTIC-RELATED-RELATED"/>
    <property type="match status" value="1"/>
</dbReference>
<dbReference type="Pfam" id="PF01118">
    <property type="entry name" value="Semialdhyde_dh"/>
    <property type="match status" value="1"/>
</dbReference>
<dbReference type="Pfam" id="PF22698">
    <property type="entry name" value="Semialdhyde_dhC_1"/>
    <property type="match status" value="1"/>
</dbReference>
<dbReference type="SMART" id="SM00859">
    <property type="entry name" value="Semialdhyde_dh"/>
    <property type="match status" value="1"/>
</dbReference>
<dbReference type="SUPFAM" id="SSF55347">
    <property type="entry name" value="Glyceraldehyde-3-phosphate dehydrogenase-like, C-terminal domain"/>
    <property type="match status" value="1"/>
</dbReference>
<dbReference type="SUPFAM" id="SSF51735">
    <property type="entry name" value="NAD(P)-binding Rossmann-fold domains"/>
    <property type="match status" value="1"/>
</dbReference>
<dbReference type="PROSITE" id="PS01224">
    <property type="entry name" value="ARGC"/>
    <property type="match status" value="1"/>
</dbReference>
<keyword id="KW-0028">Amino-acid biosynthesis</keyword>
<keyword id="KW-0055">Arginine biosynthesis</keyword>
<keyword id="KW-0963">Cytoplasm</keyword>
<keyword id="KW-0521">NADP</keyword>
<keyword id="KW-0560">Oxidoreductase</keyword>
<keyword id="KW-1185">Reference proteome</keyword>
<gene>
    <name evidence="1" type="primary">argC</name>
    <name type="ordered locus">WS2086</name>
</gene>
<proteinExistence type="inferred from homology"/>
<evidence type="ECO:0000255" key="1">
    <source>
        <dbReference type="HAMAP-Rule" id="MF_00150"/>
    </source>
</evidence>
<accession>Q7M7U1</accession>
<sequence length="337" mass="37146">MKKIPVGIVGVSGYTGLELLKMLLEHPYLELVYAANTEGGVRVGALHSSLQGVSDLSVEKADPKEAAKRCELLFLALPHQSAMEFAKEVLSLGKKVVDLSADYRLSLERYEAHYCPHLDKENLSHAVYGLIEWAREEIVQARLIANPGCYPTATLLGILPFIPYLDEDSSLFVDAKSGVSGAGKKLTHNTHYPTINENLFAYSPLSHRHEPEIAEKIELWGKKAKKVNFIPHLTPLTRGMLVSTFARLKEPVDAMAILRERYANEPFIRLRSSPVEIKAVAGTHFCDIYAMSQGRDLWVNSAIDNLLRGASSQAIANANLMLGLPEGAGLPRFAYAP</sequence>
<organism>
    <name type="scientific">Wolinella succinogenes (strain ATCC 29543 / DSM 1740 / CCUG 13145 / JCM 31913 / LMG 7466 / NCTC 11488 / FDC 602W)</name>
    <name type="common">Vibrio succinogenes</name>
    <dbReference type="NCBI Taxonomy" id="273121"/>
    <lineage>
        <taxon>Bacteria</taxon>
        <taxon>Pseudomonadati</taxon>
        <taxon>Campylobacterota</taxon>
        <taxon>Epsilonproteobacteria</taxon>
        <taxon>Campylobacterales</taxon>
        <taxon>Helicobacteraceae</taxon>
        <taxon>Wolinella</taxon>
    </lineage>
</organism>
<reference key="1">
    <citation type="journal article" date="2003" name="Proc. Natl. Acad. Sci. U.S.A.">
        <title>Complete genome sequence and analysis of Wolinella succinogenes.</title>
        <authorList>
            <person name="Baar C."/>
            <person name="Eppinger M."/>
            <person name="Raddatz G."/>
            <person name="Simon J."/>
            <person name="Lanz C."/>
            <person name="Klimmek O."/>
            <person name="Nandakumar R."/>
            <person name="Gross R."/>
            <person name="Rosinus A."/>
            <person name="Keller H."/>
            <person name="Jagtap P."/>
            <person name="Linke B."/>
            <person name="Meyer F."/>
            <person name="Lederer H."/>
            <person name="Schuster S.C."/>
        </authorList>
    </citation>
    <scope>NUCLEOTIDE SEQUENCE [LARGE SCALE GENOMIC DNA]</scope>
    <source>
        <strain>ATCC 29543 / DSM 1740 / CCUG 13145 / JCM 31913 / LMG 7466 / NCTC 11488 / FDC 602W</strain>
    </source>
</reference>
<name>ARGC_WOLSU</name>